<gene>
    <name evidence="1" type="primary">ispG</name>
    <name type="ordered locus">SSPA0324</name>
</gene>
<accession>B5BAY5</accession>
<evidence type="ECO:0000255" key="1">
    <source>
        <dbReference type="HAMAP-Rule" id="MF_00159"/>
    </source>
</evidence>
<proteinExistence type="inferred from homology"/>
<keyword id="KW-0004">4Fe-4S</keyword>
<keyword id="KW-0408">Iron</keyword>
<keyword id="KW-0411">Iron-sulfur</keyword>
<keyword id="KW-0414">Isoprene biosynthesis</keyword>
<keyword id="KW-0479">Metal-binding</keyword>
<keyword id="KW-0560">Oxidoreductase</keyword>
<dbReference type="EC" id="1.17.7.3" evidence="1"/>
<dbReference type="EMBL" id="FM200053">
    <property type="protein sequence ID" value="CAR58442.1"/>
    <property type="molecule type" value="Genomic_DNA"/>
</dbReference>
<dbReference type="RefSeq" id="WP_000551804.1">
    <property type="nucleotide sequence ID" value="NC_011147.1"/>
</dbReference>
<dbReference type="SMR" id="B5BAY5"/>
<dbReference type="KEGG" id="sek:SSPA0324"/>
<dbReference type="HOGENOM" id="CLU_042258_0_0_6"/>
<dbReference type="UniPathway" id="UPA00056">
    <property type="reaction ID" value="UER00096"/>
</dbReference>
<dbReference type="Proteomes" id="UP000001869">
    <property type="component" value="Chromosome"/>
</dbReference>
<dbReference type="GO" id="GO:0051539">
    <property type="term" value="F:4 iron, 4 sulfur cluster binding"/>
    <property type="evidence" value="ECO:0007669"/>
    <property type="project" value="UniProtKB-UniRule"/>
</dbReference>
<dbReference type="GO" id="GO:0046429">
    <property type="term" value="F:4-hydroxy-3-methylbut-2-en-1-yl diphosphate synthase activity (ferredoxin)"/>
    <property type="evidence" value="ECO:0007669"/>
    <property type="project" value="UniProtKB-UniRule"/>
</dbReference>
<dbReference type="GO" id="GO:0141197">
    <property type="term" value="F:4-hydroxy-3-methylbut-2-enyl-diphosphate synthase activity (flavodoxin)"/>
    <property type="evidence" value="ECO:0007669"/>
    <property type="project" value="UniProtKB-EC"/>
</dbReference>
<dbReference type="GO" id="GO:0005506">
    <property type="term" value="F:iron ion binding"/>
    <property type="evidence" value="ECO:0007669"/>
    <property type="project" value="InterPro"/>
</dbReference>
<dbReference type="GO" id="GO:0019288">
    <property type="term" value="P:isopentenyl diphosphate biosynthetic process, methylerythritol 4-phosphate pathway"/>
    <property type="evidence" value="ECO:0007669"/>
    <property type="project" value="UniProtKB-UniRule"/>
</dbReference>
<dbReference type="GO" id="GO:0016114">
    <property type="term" value="P:terpenoid biosynthetic process"/>
    <property type="evidence" value="ECO:0007669"/>
    <property type="project" value="InterPro"/>
</dbReference>
<dbReference type="FunFam" id="3.20.20.20:FF:000001">
    <property type="entry name" value="4-hydroxy-3-methylbut-2-en-1-yl diphosphate synthase (flavodoxin)"/>
    <property type="match status" value="1"/>
</dbReference>
<dbReference type="FunFam" id="3.30.413.10:FF:000002">
    <property type="entry name" value="4-hydroxy-3-methylbut-2-en-1-yl diphosphate synthase (flavodoxin)"/>
    <property type="match status" value="1"/>
</dbReference>
<dbReference type="Gene3D" id="3.20.20.20">
    <property type="entry name" value="Dihydropteroate synthase-like"/>
    <property type="match status" value="1"/>
</dbReference>
<dbReference type="Gene3D" id="3.30.413.10">
    <property type="entry name" value="Sulfite Reductase Hemoprotein, domain 1"/>
    <property type="match status" value="1"/>
</dbReference>
<dbReference type="HAMAP" id="MF_00159">
    <property type="entry name" value="IspG"/>
    <property type="match status" value="1"/>
</dbReference>
<dbReference type="InterPro" id="IPR011005">
    <property type="entry name" value="Dihydropteroate_synth-like_sf"/>
</dbReference>
<dbReference type="InterPro" id="IPR016425">
    <property type="entry name" value="IspG_bac"/>
</dbReference>
<dbReference type="InterPro" id="IPR004588">
    <property type="entry name" value="IspG_bac-typ"/>
</dbReference>
<dbReference type="InterPro" id="IPR045854">
    <property type="entry name" value="NO2/SO3_Rdtase_4Fe4S_sf"/>
</dbReference>
<dbReference type="NCBIfam" id="TIGR00612">
    <property type="entry name" value="ispG_gcpE"/>
    <property type="match status" value="1"/>
</dbReference>
<dbReference type="NCBIfam" id="NF001540">
    <property type="entry name" value="PRK00366.1"/>
    <property type="match status" value="1"/>
</dbReference>
<dbReference type="PANTHER" id="PTHR30454">
    <property type="entry name" value="4-HYDROXY-3-METHYLBUT-2-EN-1-YL DIPHOSPHATE SYNTHASE"/>
    <property type="match status" value="1"/>
</dbReference>
<dbReference type="PANTHER" id="PTHR30454:SF0">
    <property type="entry name" value="4-HYDROXY-3-METHYLBUT-2-EN-1-YL DIPHOSPHATE SYNTHASE (FERREDOXIN), CHLOROPLASTIC"/>
    <property type="match status" value="1"/>
</dbReference>
<dbReference type="Pfam" id="PF04551">
    <property type="entry name" value="GcpE"/>
    <property type="match status" value="1"/>
</dbReference>
<dbReference type="PIRSF" id="PIRSF004640">
    <property type="entry name" value="IspG"/>
    <property type="match status" value="1"/>
</dbReference>
<dbReference type="SUPFAM" id="SSF51717">
    <property type="entry name" value="Dihydropteroate synthetase-like"/>
    <property type="match status" value="1"/>
</dbReference>
<dbReference type="SUPFAM" id="SSF56014">
    <property type="entry name" value="Nitrite and sulphite reductase 4Fe-4S domain-like"/>
    <property type="match status" value="1"/>
</dbReference>
<sequence>MHNQAPIQRRKSTRIYVGNVPIGDGAPIAVQSMTNTRTTDVEATVNQIKALERVGADIVRVSVPTMDAAEAFKLIKQQVNVPLVADIHFDYRIALKVAEYGVDCLRINPGNIGNEERIRMVVDCARDKNIPIRIGVNAGSLEKDLQEKYGEPTPQALLESAMRHVDHLDRLNFDQFKVSVKASDVFLAVESYRLLAKQIDQPLHLGITEAGGARSGAVKSAIGLGLLLSEGIGDTLRVSLAADPVEEIKVGFDILKSLRIRARGINFIACPTCSRQEFDVIGTVNALEQRLEDIITPMDVSIIGCVVNGPGEALVSTLGVTGGNKKSGLYEDGVRKDRLDNDDMIAQLESRIRAKASQLDEARRIDVLQVEK</sequence>
<name>ISPG_SALPK</name>
<comment type="function">
    <text evidence="1">Converts 2C-methyl-D-erythritol 2,4-cyclodiphosphate (ME-2,4cPP) into 1-hydroxy-2-methyl-2-(E)-butenyl 4-diphosphate.</text>
</comment>
<comment type="catalytic activity">
    <reaction evidence="1">
        <text>(2E)-4-hydroxy-3-methylbut-2-enyl diphosphate + oxidized [flavodoxin] + H2O + 2 H(+) = 2-C-methyl-D-erythritol 2,4-cyclic diphosphate + reduced [flavodoxin]</text>
        <dbReference type="Rhea" id="RHEA:43604"/>
        <dbReference type="Rhea" id="RHEA-COMP:10622"/>
        <dbReference type="Rhea" id="RHEA-COMP:10623"/>
        <dbReference type="ChEBI" id="CHEBI:15377"/>
        <dbReference type="ChEBI" id="CHEBI:15378"/>
        <dbReference type="ChEBI" id="CHEBI:57618"/>
        <dbReference type="ChEBI" id="CHEBI:58210"/>
        <dbReference type="ChEBI" id="CHEBI:58483"/>
        <dbReference type="ChEBI" id="CHEBI:128753"/>
        <dbReference type="EC" id="1.17.7.3"/>
    </reaction>
</comment>
<comment type="cofactor">
    <cofactor evidence="1">
        <name>[4Fe-4S] cluster</name>
        <dbReference type="ChEBI" id="CHEBI:49883"/>
    </cofactor>
    <text evidence="1">Binds 1 [4Fe-4S] cluster.</text>
</comment>
<comment type="pathway">
    <text evidence="1">Isoprenoid biosynthesis; isopentenyl diphosphate biosynthesis via DXP pathway; isopentenyl diphosphate from 1-deoxy-D-xylulose 5-phosphate: step 5/6.</text>
</comment>
<comment type="similarity">
    <text evidence="1">Belongs to the IspG family.</text>
</comment>
<organism>
    <name type="scientific">Salmonella paratyphi A (strain AKU_12601)</name>
    <dbReference type="NCBI Taxonomy" id="554290"/>
    <lineage>
        <taxon>Bacteria</taxon>
        <taxon>Pseudomonadati</taxon>
        <taxon>Pseudomonadota</taxon>
        <taxon>Gammaproteobacteria</taxon>
        <taxon>Enterobacterales</taxon>
        <taxon>Enterobacteriaceae</taxon>
        <taxon>Salmonella</taxon>
    </lineage>
</organism>
<feature type="chain" id="PRO_1000097184" description="4-hydroxy-3-methylbut-2-en-1-yl diphosphate synthase (flavodoxin)">
    <location>
        <begin position="1"/>
        <end position="372"/>
    </location>
</feature>
<feature type="binding site" evidence="1">
    <location>
        <position position="270"/>
    </location>
    <ligand>
        <name>[4Fe-4S] cluster</name>
        <dbReference type="ChEBI" id="CHEBI:49883"/>
    </ligand>
</feature>
<feature type="binding site" evidence="1">
    <location>
        <position position="273"/>
    </location>
    <ligand>
        <name>[4Fe-4S] cluster</name>
        <dbReference type="ChEBI" id="CHEBI:49883"/>
    </ligand>
</feature>
<feature type="binding site" evidence="1">
    <location>
        <position position="305"/>
    </location>
    <ligand>
        <name>[4Fe-4S] cluster</name>
        <dbReference type="ChEBI" id="CHEBI:49883"/>
    </ligand>
</feature>
<feature type="binding site" evidence="1">
    <location>
        <position position="312"/>
    </location>
    <ligand>
        <name>[4Fe-4S] cluster</name>
        <dbReference type="ChEBI" id="CHEBI:49883"/>
    </ligand>
</feature>
<protein>
    <recommendedName>
        <fullName evidence="1">4-hydroxy-3-methylbut-2-en-1-yl diphosphate synthase (flavodoxin)</fullName>
        <ecNumber evidence="1">1.17.7.3</ecNumber>
    </recommendedName>
    <alternativeName>
        <fullName evidence="1">1-hydroxy-2-methyl-2-(E)-butenyl 4-diphosphate synthase</fullName>
    </alternativeName>
</protein>
<reference key="1">
    <citation type="journal article" date="2009" name="BMC Genomics">
        <title>Pseudogene accumulation in the evolutionary histories of Salmonella enterica serovars Paratyphi A and Typhi.</title>
        <authorList>
            <person name="Holt K.E."/>
            <person name="Thomson N.R."/>
            <person name="Wain J."/>
            <person name="Langridge G.C."/>
            <person name="Hasan R."/>
            <person name="Bhutta Z.A."/>
            <person name="Quail M.A."/>
            <person name="Norbertczak H."/>
            <person name="Walker D."/>
            <person name="Simmonds M."/>
            <person name="White B."/>
            <person name="Bason N."/>
            <person name="Mungall K."/>
            <person name="Dougan G."/>
            <person name="Parkhill J."/>
        </authorList>
    </citation>
    <scope>NUCLEOTIDE SEQUENCE [LARGE SCALE GENOMIC DNA]</scope>
    <source>
        <strain>AKU_12601</strain>
    </source>
</reference>